<reference key="1">
    <citation type="journal article" date="2009" name="PLoS Pathog.">
        <title>Molecular evolutionary consequences of niche restriction in Francisella tularensis, a facultative intracellular pathogen.</title>
        <authorList>
            <person name="Larsson P."/>
            <person name="Elfsmark D."/>
            <person name="Svensson K."/>
            <person name="Wikstroem P."/>
            <person name="Forsman M."/>
            <person name="Brettin T."/>
            <person name="Keim P."/>
            <person name="Johansson A."/>
        </authorList>
    </citation>
    <scope>NUCLEOTIDE SEQUENCE [LARGE SCALE GENOMIC DNA]</scope>
    <source>
        <strain>FSC147</strain>
    </source>
</reference>
<organism>
    <name type="scientific">Francisella tularensis subsp. mediasiatica (strain FSC147)</name>
    <dbReference type="NCBI Taxonomy" id="441952"/>
    <lineage>
        <taxon>Bacteria</taxon>
        <taxon>Pseudomonadati</taxon>
        <taxon>Pseudomonadota</taxon>
        <taxon>Gammaproteobacteria</taxon>
        <taxon>Thiotrichales</taxon>
        <taxon>Francisellaceae</taxon>
        <taxon>Francisella</taxon>
    </lineage>
</organism>
<keyword id="KW-0963">Cytoplasm</keyword>
<keyword id="KW-0350">Heme biosynthesis</keyword>
<keyword id="KW-0408">Iron</keyword>
<keyword id="KW-0456">Lyase</keyword>
<keyword id="KW-0479">Metal-binding</keyword>
<keyword id="KW-0627">Porphyrin biosynthesis</keyword>
<feature type="chain" id="PRO_1000116046" description="Ferrochelatase">
    <location>
        <begin position="1"/>
        <end position="333"/>
    </location>
</feature>
<feature type="binding site" evidence="1">
    <location>
        <position position="202"/>
    </location>
    <ligand>
        <name>Fe cation</name>
        <dbReference type="ChEBI" id="CHEBI:24875"/>
    </ligand>
</feature>
<feature type="binding site" evidence="1">
    <location>
        <position position="284"/>
    </location>
    <ligand>
        <name>Fe cation</name>
        <dbReference type="ChEBI" id="CHEBI:24875"/>
    </ligand>
</feature>
<name>HEMH_FRATM</name>
<sequence length="333" mass="39020">MQQYSSKYNKQAILLVNLGTPDNYDTKSIKRYLKEFLSDPRVIEANPVLWKIILNLIILPIRAKKNVHTYKTVWNKQHNKSPLLFYTENLADKLDKKLDNYIVDYAMRYGNPSIESKIKSLQDQGATEIIIFPLYPQYSATTTATVYDEVYRVLSKLRWQPTIKGINPYYDNKFHIQTISQQIKEHLKKLDSTPDTVLFSFHGLPKEYFDKGDPYYCHCYKTYRLVKEELQNEYPNIDFELSFQSRFGPKKWLEPYTTVKLEEFAKQNKSVVVIAPGFSADCLETLEELAISEKENFIKKGGKEFSLIPCLNDSNQHVDMLYNIIDEEICLKK</sequence>
<comment type="function">
    <text evidence="1">Catalyzes the ferrous insertion into protoporphyrin IX.</text>
</comment>
<comment type="catalytic activity">
    <reaction evidence="1">
        <text>heme b + 2 H(+) = protoporphyrin IX + Fe(2+)</text>
        <dbReference type="Rhea" id="RHEA:22584"/>
        <dbReference type="ChEBI" id="CHEBI:15378"/>
        <dbReference type="ChEBI" id="CHEBI:29033"/>
        <dbReference type="ChEBI" id="CHEBI:57306"/>
        <dbReference type="ChEBI" id="CHEBI:60344"/>
        <dbReference type="EC" id="4.98.1.1"/>
    </reaction>
</comment>
<comment type="pathway">
    <text evidence="1">Porphyrin-containing compound metabolism; protoheme biosynthesis; protoheme from protoporphyrin-IX: step 1/1.</text>
</comment>
<comment type="subcellular location">
    <subcellularLocation>
        <location evidence="1">Cytoplasm</location>
    </subcellularLocation>
</comment>
<comment type="similarity">
    <text evidence="1">Belongs to the ferrochelatase family.</text>
</comment>
<gene>
    <name evidence="1" type="primary">hemH</name>
    <name type="ordered locus">FTM_1306</name>
</gene>
<proteinExistence type="inferred from homology"/>
<dbReference type="EC" id="4.98.1.1" evidence="1"/>
<dbReference type="EMBL" id="CP000915">
    <property type="protein sequence ID" value="ACD31156.1"/>
    <property type="molecule type" value="Genomic_DNA"/>
</dbReference>
<dbReference type="SMR" id="B2SDE2"/>
<dbReference type="KEGG" id="ftm:FTM_1306"/>
<dbReference type="HOGENOM" id="CLU_018884_0_0_6"/>
<dbReference type="UniPathway" id="UPA00252">
    <property type="reaction ID" value="UER00325"/>
</dbReference>
<dbReference type="GO" id="GO:0005737">
    <property type="term" value="C:cytoplasm"/>
    <property type="evidence" value="ECO:0007669"/>
    <property type="project" value="UniProtKB-SubCell"/>
</dbReference>
<dbReference type="GO" id="GO:0004325">
    <property type="term" value="F:ferrochelatase activity"/>
    <property type="evidence" value="ECO:0007669"/>
    <property type="project" value="UniProtKB-UniRule"/>
</dbReference>
<dbReference type="GO" id="GO:0046872">
    <property type="term" value="F:metal ion binding"/>
    <property type="evidence" value="ECO:0007669"/>
    <property type="project" value="UniProtKB-KW"/>
</dbReference>
<dbReference type="GO" id="GO:0006783">
    <property type="term" value="P:heme biosynthetic process"/>
    <property type="evidence" value="ECO:0007669"/>
    <property type="project" value="UniProtKB-UniRule"/>
</dbReference>
<dbReference type="CDD" id="cd00419">
    <property type="entry name" value="Ferrochelatase_C"/>
    <property type="match status" value="1"/>
</dbReference>
<dbReference type="CDD" id="cd03411">
    <property type="entry name" value="Ferrochelatase_N"/>
    <property type="match status" value="1"/>
</dbReference>
<dbReference type="FunFam" id="3.40.50.1400:FF:000002">
    <property type="entry name" value="Ferrochelatase"/>
    <property type="match status" value="1"/>
</dbReference>
<dbReference type="Gene3D" id="3.40.50.1400">
    <property type="match status" value="2"/>
</dbReference>
<dbReference type="HAMAP" id="MF_00323">
    <property type="entry name" value="Ferrochelatase"/>
    <property type="match status" value="1"/>
</dbReference>
<dbReference type="InterPro" id="IPR001015">
    <property type="entry name" value="Ferrochelatase"/>
</dbReference>
<dbReference type="InterPro" id="IPR019772">
    <property type="entry name" value="Ferrochelatase_AS"/>
</dbReference>
<dbReference type="InterPro" id="IPR033644">
    <property type="entry name" value="Ferrochelatase_C"/>
</dbReference>
<dbReference type="InterPro" id="IPR033659">
    <property type="entry name" value="Ferrochelatase_N"/>
</dbReference>
<dbReference type="NCBIfam" id="TIGR00109">
    <property type="entry name" value="hemH"/>
    <property type="match status" value="1"/>
</dbReference>
<dbReference type="PANTHER" id="PTHR11108">
    <property type="entry name" value="FERROCHELATASE"/>
    <property type="match status" value="1"/>
</dbReference>
<dbReference type="PANTHER" id="PTHR11108:SF1">
    <property type="entry name" value="FERROCHELATASE, MITOCHONDRIAL"/>
    <property type="match status" value="1"/>
</dbReference>
<dbReference type="Pfam" id="PF00762">
    <property type="entry name" value="Ferrochelatase"/>
    <property type="match status" value="1"/>
</dbReference>
<dbReference type="SUPFAM" id="SSF53800">
    <property type="entry name" value="Chelatase"/>
    <property type="match status" value="1"/>
</dbReference>
<dbReference type="PROSITE" id="PS00534">
    <property type="entry name" value="FERROCHELATASE"/>
    <property type="match status" value="1"/>
</dbReference>
<evidence type="ECO:0000255" key="1">
    <source>
        <dbReference type="HAMAP-Rule" id="MF_00323"/>
    </source>
</evidence>
<accession>B2SDE2</accession>
<protein>
    <recommendedName>
        <fullName evidence="1">Ferrochelatase</fullName>
        <ecNumber evidence="1">4.98.1.1</ecNumber>
    </recommendedName>
    <alternativeName>
        <fullName evidence="1">Heme synthase</fullName>
    </alternativeName>
    <alternativeName>
        <fullName evidence="1">Protoheme ferro-lyase</fullName>
    </alternativeName>
</protein>